<protein>
    <recommendedName>
        <fullName evidence="1">Peptide chain release factor 1</fullName>
        <shortName evidence="1">RF-1</shortName>
    </recommendedName>
</protein>
<gene>
    <name evidence="1" type="primary">prfA</name>
    <name type="ordered locus">VV1_0253</name>
</gene>
<dbReference type="EMBL" id="AE016795">
    <property type="protein sequence ID" value="AAO08789.2"/>
    <property type="molecule type" value="Genomic_DNA"/>
</dbReference>
<dbReference type="RefSeq" id="WP_011078367.1">
    <property type="nucleotide sequence ID" value="NC_004459.3"/>
</dbReference>
<dbReference type="SMR" id="Q8DFF9"/>
<dbReference type="KEGG" id="vvu:VV1_0253"/>
<dbReference type="HOGENOM" id="CLU_036856_0_1_6"/>
<dbReference type="Proteomes" id="UP000002275">
    <property type="component" value="Chromosome 1"/>
</dbReference>
<dbReference type="GO" id="GO:0005737">
    <property type="term" value="C:cytoplasm"/>
    <property type="evidence" value="ECO:0007669"/>
    <property type="project" value="UniProtKB-SubCell"/>
</dbReference>
<dbReference type="GO" id="GO:0016149">
    <property type="term" value="F:translation release factor activity, codon specific"/>
    <property type="evidence" value="ECO:0007669"/>
    <property type="project" value="UniProtKB-UniRule"/>
</dbReference>
<dbReference type="FunFam" id="3.30.160.20:FF:000004">
    <property type="entry name" value="Peptide chain release factor 1"/>
    <property type="match status" value="1"/>
</dbReference>
<dbReference type="FunFam" id="3.30.70.1660:FF:000002">
    <property type="entry name" value="Peptide chain release factor 1"/>
    <property type="match status" value="1"/>
</dbReference>
<dbReference type="FunFam" id="3.30.70.1660:FF:000004">
    <property type="entry name" value="Peptide chain release factor 1"/>
    <property type="match status" value="1"/>
</dbReference>
<dbReference type="Gene3D" id="3.30.160.20">
    <property type="match status" value="1"/>
</dbReference>
<dbReference type="Gene3D" id="3.30.70.1660">
    <property type="match status" value="1"/>
</dbReference>
<dbReference type="Gene3D" id="6.10.140.1950">
    <property type="match status" value="1"/>
</dbReference>
<dbReference type="HAMAP" id="MF_00093">
    <property type="entry name" value="Rel_fac_1"/>
    <property type="match status" value="1"/>
</dbReference>
<dbReference type="InterPro" id="IPR005139">
    <property type="entry name" value="PCRF"/>
</dbReference>
<dbReference type="InterPro" id="IPR000352">
    <property type="entry name" value="Pep_chain_release_fac_I"/>
</dbReference>
<dbReference type="InterPro" id="IPR045853">
    <property type="entry name" value="Pep_chain_release_fac_I_sf"/>
</dbReference>
<dbReference type="InterPro" id="IPR050057">
    <property type="entry name" value="Prokaryotic/Mito_RF"/>
</dbReference>
<dbReference type="InterPro" id="IPR004373">
    <property type="entry name" value="RF-1"/>
</dbReference>
<dbReference type="NCBIfam" id="TIGR00019">
    <property type="entry name" value="prfA"/>
    <property type="match status" value="1"/>
</dbReference>
<dbReference type="NCBIfam" id="NF001859">
    <property type="entry name" value="PRK00591.1"/>
    <property type="match status" value="1"/>
</dbReference>
<dbReference type="PANTHER" id="PTHR43804">
    <property type="entry name" value="LD18447P"/>
    <property type="match status" value="1"/>
</dbReference>
<dbReference type="PANTHER" id="PTHR43804:SF7">
    <property type="entry name" value="LD18447P"/>
    <property type="match status" value="1"/>
</dbReference>
<dbReference type="Pfam" id="PF03462">
    <property type="entry name" value="PCRF"/>
    <property type="match status" value="1"/>
</dbReference>
<dbReference type="Pfam" id="PF00472">
    <property type="entry name" value="RF-1"/>
    <property type="match status" value="1"/>
</dbReference>
<dbReference type="SMART" id="SM00937">
    <property type="entry name" value="PCRF"/>
    <property type="match status" value="1"/>
</dbReference>
<dbReference type="SUPFAM" id="SSF75620">
    <property type="entry name" value="Release factor"/>
    <property type="match status" value="1"/>
</dbReference>
<dbReference type="PROSITE" id="PS00745">
    <property type="entry name" value="RF_PROK_I"/>
    <property type="match status" value="1"/>
</dbReference>
<organism>
    <name type="scientific">Vibrio vulnificus (strain CMCP6)</name>
    <dbReference type="NCBI Taxonomy" id="216895"/>
    <lineage>
        <taxon>Bacteria</taxon>
        <taxon>Pseudomonadati</taxon>
        <taxon>Pseudomonadota</taxon>
        <taxon>Gammaproteobacteria</taxon>
        <taxon>Vibrionales</taxon>
        <taxon>Vibrionaceae</taxon>
        <taxon>Vibrio</taxon>
    </lineage>
</organism>
<accession>Q8DFF9</accession>
<evidence type="ECO:0000255" key="1">
    <source>
        <dbReference type="HAMAP-Rule" id="MF_00093"/>
    </source>
</evidence>
<proteinExistence type="inferred from homology"/>
<feature type="chain" id="PRO_0000177768" description="Peptide chain release factor 1">
    <location>
        <begin position="1"/>
        <end position="362"/>
    </location>
</feature>
<feature type="modified residue" description="N5-methylglutamine" evidence="1">
    <location>
        <position position="237"/>
    </location>
</feature>
<sequence>MKASILTKLEMLVERYEEVQHLLGDPGVIGDQDKFRALSKEYSQLEEVTKCFTAYKQAQEDLVAAEEMAKEDDAEMREMAQEEIKAAKVAIEDLAAELQILLLPKDPNDDRNCFLEIRAGAGGDEAGIFAGDLFRMYSKFAEKRGWRIEVMSANEAEHGGYKEMIAKVNGDGAYGFLKFESGGHRVQRVPATESQGRVHTSACTVAIMPEIPEAEIPEIKASDLKIDTFRSSGAGGQHVNTTDSAIRITHLPTGTVVECQDERSQHKNKAKAMAVLAARIVQAEEAKRAAEVSDTRRNLLGSGDRSDRIRTYNYPQGRVSDHRINLTIYRLSEVMEGDLQSLIDPVIQEHQADQLAALAENN</sequence>
<comment type="function">
    <text evidence="1">Peptide chain release factor 1 directs the termination of translation in response to the peptide chain termination codons UAG and UAA.</text>
</comment>
<comment type="subcellular location">
    <subcellularLocation>
        <location evidence="1">Cytoplasm</location>
    </subcellularLocation>
</comment>
<comment type="PTM">
    <text evidence="1">Methylated by PrmC. Methylation increases the termination efficiency of RF1.</text>
</comment>
<comment type="similarity">
    <text evidence="1">Belongs to the prokaryotic/mitochondrial release factor family.</text>
</comment>
<name>RF1_VIBVU</name>
<reference key="1">
    <citation type="submission" date="2002-12" db="EMBL/GenBank/DDBJ databases">
        <title>Complete genome sequence of Vibrio vulnificus CMCP6.</title>
        <authorList>
            <person name="Rhee J.H."/>
            <person name="Kim S.Y."/>
            <person name="Chung S.S."/>
            <person name="Kim J.J."/>
            <person name="Moon Y.H."/>
            <person name="Jeong H."/>
            <person name="Choy H.E."/>
        </authorList>
    </citation>
    <scope>NUCLEOTIDE SEQUENCE [LARGE SCALE GENOMIC DNA]</scope>
    <source>
        <strain>CMCP6</strain>
    </source>
</reference>
<keyword id="KW-0963">Cytoplasm</keyword>
<keyword id="KW-0488">Methylation</keyword>
<keyword id="KW-0648">Protein biosynthesis</keyword>